<organism>
    <name type="scientific">Bungarus candidus</name>
    <name type="common">Malayan krait</name>
    <dbReference type="NCBI Taxonomy" id="92438"/>
    <lineage>
        <taxon>Eukaryota</taxon>
        <taxon>Metazoa</taxon>
        <taxon>Chordata</taxon>
        <taxon>Craniata</taxon>
        <taxon>Vertebrata</taxon>
        <taxon>Euteleostomi</taxon>
        <taxon>Lepidosauria</taxon>
        <taxon>Squamata</taxon>
        <taxon>Bifurcata</taxon>
        <taxon>Unidentata</taxon>
        <taxon>Episquamata</taxon>
        <taxon>Toxicofera</taxon>
        <taxon>Serpentes</taxon>
        <taxon>Colubroidea</taxon>
        <taxon>Elapidae</taxon>
        <taxon>Bungarinae</taxon>
        <taxon>Bungarus</taxon>
    </lineage>
</organism>
<evidence type="ECO:0000250" key="1">
    <source>
        <dbReference type="UniProtKB" id="P00617"/>
    </source>
</evidence>
<evidence type="ECO:0000250" key="2">
    <source>
        <dbReference type="UniProtKB" id="P14418"/>
    </source>
</evidence>
<evidence type="ECO:0000255" key="3">
    <source>
        <dbReference type="PROSITE-ProRule" id="PRU10035"/>
    </source>
</evidence>
<evidence type="ECO:0000255" key="4">
    <source>
        <dbReference type="PROSITE-ProRule" id="PRU10036"/>
    </source>
</evidence>
<evidence type="ECO:0000305" key="5"/>
<evidence type="ECO:0000305" key="6">
    <source ref="1"/>
</evidence>
<proteinExistence type="evidence at transcript level"/>
<accession>Q6YIJ3</accession>
<reference key="1">
    <citation type="submission" date="2002-08" db="EMBL/GenBank/DDBJ databases">
        <title>Comparative genomics and characterization of novel neurotoxins in the venom of Bungarus candidus (Malayan banded krait).</title>
        <authorList>
            <person name="Tsai I.-H."/>
            <person name="Hsu H.Y."/>
            <person name="Wang Y.-M."/>
        </authorList>
    </citation>
    <scope>NUCLEOTIDE SEQUENCE [MRNA]</scope>
    <source>
        <tissue>Venom gland</tissue>
    </source>
</reference>
<name>PA2A_BUNCA</name>
<sequence length="137" mass="15063">AVCVSLLGAANIPPHPLNLINFMEMIRYTIPCEKTWGEYADYGCYCGAGGSGRPIDALDRCCYVHDNCYGDAANIRDCNPKTQSYSYKLTKRTIICYGAAGTCARVVCDCDRTAALCFGDSEYIEGHKNIDTARFCQ</sequence>
<comment type="function">
    <text>Beta bungarotoxin is a presynaptic neurotoxin. The A chain has phospholipase activity. PLA2 catalyzes the calcium-dependent hydrolysis of the 2-acyl groups in 3-sn-phosphoglycerides.</text>
</comment>
<comment type="catalytic activity">
    <reaction evidence="3 4">
        <text>a 1,2-diacyl-sn-glycero-3-phosphocholine + H2O = a 1-acyl-sn-glycero-3-phosphocholine + a fatty acid + H(+)</text>
        <dbReference type="Rhea" id="RHEA:15801"/>
        <dbReference type="ChEBI" id="CHEBI:15377"/>
        <dbReference type="ChEBI" id="CHEBI:15378"/>
        <dbReference type="ChEBI" id="CHEBI:28868"/>
        <dbReference type="ChEBI" id="CHEBI:57643"/>
        <dbReference type="ChEBI" id="CHEBI:58168"/>
        <dbReference type="EC" id="3.1.1.4"/>
    </reaction>
</comment>
<comment type="cofactor">
    <cofactor evidence="1">
        <name>Ca(2+)</name>
        <dbReference type="ChEBI" id="CHEBI:29108"/>
    </cofactor>
    <text evidence="1">Binds 1 Ca(2+) ion.</text>
</comment>
<comment type="subunit">
    <text evidence="1">Heterodimer; disulfide-linked. The A chain has phospholipase A2 activity and the B chain shows homology with the basic protease inhibitors.</text>
</comment>
<comment type="subcellular location">
    <subcellularLocation>
        <location evidence="6">Secreted</location>
    </subcellularLocation>
</comment>
<comment type="tissue specificity">
    <text evidence="6">Expressed by the venom gland.</text>
</comment>
<comment type="similarity">
    <text evidence="5">Belongs to the phospholipase A2 family. Group I subfamily. D49 sub-subfamily.</text>
</comment>
<keyword id="KW-0106">Calcium</keyword>
<keyword id="KW-1015">Disulfide bond</keyword>
<keyword id="KW-0378">Hydrolase</keyword>
<keyword id="KW-0442">Lipid degradation</keyword>
<keyword id="KW-0443">Lipid metabolism</keyword>
<keyword id="KW-0479">Metal-binding</keyword>
<keyword id="KW-0528">Neurotoxin</keyword>
<keyword id="KW-0638">Presynaptic neurotoxin</keyword>
<keyword id="KW-0964">Secreted</keyword>
<keyword id="KW-0732">Signal</keyword>
<keyword id="KW-0800">Toxin</keyword>
<feature type="signal peptide" evidence="1">
    <location>
        <begin position="1" status="less than"/>
        <end position="9"/>
    </location>
</feature>
<feature type="propeptide" id="PRO_0000271445" evidence="1">
    <location>
        <begin position="10"/>
        <end position="17"/>
    </location>
</feature>
<feature type="chain" id="PRO_0000271446" description="Acidic phospholipase A2 beta-bungarotoxin A chain" evidence="1">
    <location>
        <begin position="18"/>
        <end position="137"/>
    </location>
</feature>
<feature type="active site" evidence="2">
    <location>
        <position position="65"/>
    </location>
</feature>
<feature type="active site" evidence="2">
    <location>
        <position position="111"/>
    </location>
</feature>
<feature type="binding site" evidence="1">
    <location>
        <position position="45"/>
    </location>
    <ligand>
        <name>Ca(2+)</name>
        <dbReference type="ChEBI" id="CHEBI:29108"/>
    </ligand>
</feature>
<feature type="binding site" evidence="1">
    <location>
        <position position="47"/>
    </location>
    <ligand>
        <name>Ca(2+)</name>
        <dbReference type="ChEBI" id="CHEBI:29108"/>
    </ligand>
</feature>
<feature type="binding site" evidence="1">
    <location>
        <position position="49"/>
    </location>
    <ligand>
        <name>Ca(2+)</name>
        <dbReference type="ChEBI" id="CHEBI:29108"/>
    </ligand>
</feature>
<feature type="binding site" evidence="1">
    <location>
        <position position="66"/>
    </location>
    <ligand>
        <name>Ca(2+)</name>
        <dbReference type="ChEBI" id="CHEBI:29108"/>
    </ligand>
</feature>
<feature type="disulfide bond" description="Interchain (with a B chain)" evidence="1">
    <location>
        <position position="32"/>
    </location>
</feature>
<feature type="disulfide bond" evidence="1">
    <location>
        <begin position="44"/>
        <end position="136"/>
    </location>
</feature>
<feature type="disulfide bond" evidence="1">
    <location>
        <begin position="46"/>
        <end position="62"/>
    </location>
</feature>
<feature type="disulfide bond" evidence="1">
    <location>
        <begin position="61"/>
        <end position="117"/>
    </location>
</feature>
<feature type="disulfide bond" evidence="1">
    <location>
        <begin position="68"/>
        <end position="110"/>
    </location>
</feature>
<feature type="disulfide bond" evidence="1">
    <location>
        <begin position="78"/>
        <end position="103"/>
    </location>
</feature>
<feature type="disulfide bond" evidence="1">
    <location>
        <begin position="96"/>
        <end position="108"/>
    </location>
</feature>
<feature type="non-terminal residue" evidence="6">
    <location>
        <position position="1"/>
    </location>
</feature>
<protein>
    <recommendedName>
        <fullName>Acidic phospholipase A2 beta-bungarotoxin A chain</fullName>
        <shortName>Beta-BuTX A chain</shortName>
        <shortName>svPLA2</shortName>
        <ecNumber>3.1.1.4</ecNumber>
    </recommendedName>
    <alternativeName>
        <fullName>Phosphatidylcholine 2-acylhydrolase</fullName>
    </alternativeName>
</protein>
<dbReference type="EC" id="3.1.1.4"/>
<dbReference type="EMBL" id="AY142324">
    <property type="protein sequence ID" value="AAN16113.1"/>
    <property type="molecule type" value="mRNA"/>
</dbReference>
<dbReference type="SMR" id="Q6YIJ3"/>
<dbReference type="GO" id="GO:0005576">
    <property type="term" value="C:extracellular region"/>
    <property type="evidence" value="ECO:0007669"/>
    <property type="project" value="UniProtKB-SubCell"/>
</dbReference>
<dbReference type="GO" id="GO:0005509">
    <property type="term" value="F:calcium ion binding"/>
    <property type="evidence" value="ECO:0007669"/>
    <property type="project" value="InterPro"/>
</dbReference>
<dbReference type="GO" id="GO:0047498">
    <property type="term" value="F:calcium-dependent phospholipase A2 activity"/>
    <property type="evidence" value="ECO:0007669"/>
    <property type="project" value="TreeGrafter"/>
</dbReference>
<dbReference type="GO" id="GO:0005543">
    <property type="term" value="F:phospholipid binding"/>
    <property type="evidence" value="ECO:0007669"/>
    <property type="project" value="TreeGrafter"/>
</dbReference>
<dbReference type="GO" id="GO:0090729">
    <property type="term" value="F:toxin activity"/>
    <property type="evidence" value="ECO:0007669"/>
    <property type="project" value="UniProtKB-KW"/>
</dbReference>
<dbReference type="GO" id="GO:0050482">
    <property type="term" value="P:arachidonate secretion"/>
    <property type="evidence" value="ECO:0007669"/>
    <property type="project" value="InterPro"/>
</dbReference>
<dbReference type="GO" id="GO:0016042">
    <property type="term" value="P:lipid catabolic process"/>
    <property type="evidence" value="ECO:0007669"/>
    <property type="project" value="UniProtKB-KW"/>
</dbReference>
<dbReference type="GO" id="GO:0006644">
    <property type="term" value="P:phospholipid metabolic process"/>
    <property type="evidence" value="ECO:0007669"/>
    <property type="project" value="InterPro"/>
</dbReference>
<dbReference type="CDD" id="cd00125">
    <property type="entry name" value="PLA2c"/>
    <property type="match status" value="1"/>
</dbReference>
<dbReference type="FunFam" id="1.20.90.10:FF:000007">
    <property type="entry name" value="Acidic phospholipase A2"/>
    <property type="match status" value="1"/>
</dbReference>
<dbReference type="Gene3D" id="1.20.90.10">
    <property type="entry name" value="Phospholipase A2 domain"/>
    <property type="match status" value="1"/>
</dbReference>
<dbReference type="InterPro" id="IPR001211">
    <property type="entry name" value="PLipase_A2"/>
</dbReference>
<dbReference type="InterPro" id="IPR033112">
    <property type="entry name" value="PLipase_A2_Asp_AS"/>
</dbReference>
<dbReference type="InterPro" id="IPR016090">
    <property type="entry name" value="PLipase_A2_dom"/>
</dbReference>
<dbReference type="InterPro" id="IPR036444">
    <property type="entry name" value="PLipase_A2_dom_sf"/>
</dbReference>
<dbReference type="InterPro" id="IPR033113">
    <property type="entry name" value="PLipase_A2_His_AS"/>
</dbReference>
<dbReference type="PANTHER" id="PTHR11716:SF100">
    <property type="entry name" value="PHOSPHOLIPASE A2"/>
    <property type="match status" value="1"/>
</dbReference>
<dbReference type="PANTHER" id="PTHR11716">
    <property type="entry name" value="PHOSPHOLIPASE A2 FAMILY MEMBER"/>
    <property type="match status" value="1"/>
</dbReference>
<dbReference type="Pfam" id="PF00068">
    <property type="entry name" value="Phospholip_A2_1"/>
    <property type="match status" value="1"/>
</dbReference>
<dbReference type="PRINTS" id="PR00389">
    <property type="entry name" value="PHPHLIPASEA2"/>
</dbReference>
<dbReference type="SMART" id="SM00085">
    <property type="entry name" value="PA2c"/>
    <property type="match status" value="1"/>
</dbReference>
<dbReference type="SUPFAM" id="SSF48619">
    <property type="entry name" value="Phospholipase A2, PLA2"/>
    <property type="match status" value="1"/>
</dbReference>
<dbReference type="PROSITE" id="PS00119">
    <property type="entry name" value="PA2_ASP"/>
    <property type="match status" value="1"/>
</dbReference>
<dbReference type="PROSITE" id="PS00118">
    <property type="entry name" value="PA2_HIS"/>
    <property type="match status" value="1"/>
</dbReference>